<feature type="chain" id="PRO_0000236274" description="Betaine--homocysteine S-methyltransferase 1">
    <location>
        <begin position="1"/>
        <end position="407"/>
    </location>
</feature>
<feature type="domain" description="Hcy-binding" evidence="4">
    <location>
        <begin position="11"/>
        <end position="314"/>
    </location>
</feature>
<feature type="binding site" evidence="3 4">
    <location>
        <position position="217"/>
    </location>
    <ligand>
        <name>Zn(2+)</name>
        <dbReference type="ChEBI" id="CHEBI:29105"/>
    </ligand>
</feature>
<feature type="binding site" evidence="3 4">
    <location>
        <position position="299"/>
    </location>
    <ligand>
        <name>Zn(2+)</name>
        <dbReference type="ChEBI" id="CHEBI:29105"/>
    </ligand>
</feature>
<feature type="binding site" evidence="3 4">
    <location>
        <position position="300"/>
    </location>
    <ligand>
        <name>Zn(2+)</name>
        <dbReference type="ChEBI" id="CHEBI:29105"/>
    </ligand>
</feature>
<feature type="modified residue" description="N6-succinyllysine" evidence="2">
    <location>
        <position position="40"/>
    </location>
</feature>
<feature type="modified residue" description="N6-succinyllysine" evidence="2">
    <location>
        <position position="93"/>
    </location>
</feature>
<feature type="modified residue" description="N6-succinyllysine" evidence="2">
    <location>
        <position position="98"/>
    </location>
</feature>
<feature type="modified residue" description="N6-succinyllysine" evidence="2">
    <location>
        <position position="232"/>
    </location>
</feature>
<feature type="modified residue" description="N6-succinyllysine" evidence="2">
    <location>
        <position position="241"/>
    </location>
</feature>
<feature type="modified residue" description="Phosphoserine" evidence="1">
    <location>
        <position position="330"/>
    </location>
</feature>
<feature type="modified residue" description="N6-succinyllysine" evidence="2">
    <location>
        <position position="340"/>
    </location>
</feature>
<feature type="modified residue" description="N6-succinyllysine" evidence="2">
    <location>
        <position position="377"/>
    </location>
</feature>
<feature type="sequence conflict" description="In Ref. 2; AAI12600." evidence="5" ref="2">
    <original>N</original>
    <variation>K</variation>
    <location>
        <position position="216"/>
    </location>
</feature>
<sequence>MAPAGGKNVKKGILERLNSGEVIIGDGGFVFALEKRGYVKAGPWTPEAAVEHPEAVRQLHREFLRAGSNVMQTFTFYASEDKLENRGNYVAEKISGQKVNEAACDIARQVADEGDALVAGGVSQTPSYLSCKSETEVKKVFQQQLEVFVKKNVDFLIAEYFEHVEEAVWAVEALKASGKPVAATMCIGPEGDLHSVTPGECAVRLVKAGASIVGVNCHFDPTISLQTVKLMKEGLEAAGLKAHLMSQPLAYHTPDCGKQGFIDLPEFPFGLEPRVATRWDIQKYAREAYNLGVRYIGGCCGFEPYHIRAIAEELAPERGFLPLASEKHGSWGSGLDMHTKPWIRARARKEYWENLQIASGRPYNPSMSKPDAWGVTKGTAELMQQKEATTEQQLRELFEKQKFKSAQ</sequence>
<keyword id="KW-0963">Cytoplasm</keyword>
<keyword id="KW-0479">Metal-binding</keyword>
<keyword id="KW-0489">Methyltransferase</keyword>
<keyword id="KW-0539">Nucleus</keyword>
<keyword id="KW-0597">Phosphoprotein</keyword>
<keyword id="KW-1185">Reference proteome</keyword>
<keyword id="KW-0808">Transferase</keyword>
<keyword id="KW-0862">Zinc</keyword>
<dbReference type="EC" id="2.1.1.5" evidence="3"/>
<dbReference type="EMBL" id="AY854632">
    <property type="protein sequence ID" value="AAW39034.1"/>
    <property type="molecule type" value="mRNA"/>
</dbReference>
<dbReference type="EMBL" id="BC112599">
    <property type="protein sequence ID" value="AAI12600.1"/>
    <property type="molecule type" value="mRNA"/>
</dbReference>
<dbReference type="RefSeq" id="NP_001011679.1">
    <property type="nucleotide sequence ID" value="NM_001011679.1"/>
</dbReference>
<dbReference type="SMR" id="Q5I597"/>
<dbReference type="FunCoup" id="Q5I597">
    <property type="interactions" value="138"/>
</dbReference>
<dbReference type="STRING" id="9913.ENSBTAP00000002916"/>
<dbReference type="PaxDb" id="9913-ENSBTAP00000002916"/>
<dbReference type="PeptideAtlas" id="Q5I597"/>
<dbReference type="GeneID" id="497025"/>
<dbReference type="KEGG" id="bta:497025"/>
<dbReference type="CTD" id="635"/>
<dbReference type="eggNOG" id="KOG1579">
    <property type="taxonomic scope" value="Eukaryota"/>
</dbReference>
<dbReference type="HOGENOM" id="CLU_047457_0_0_1"/>
<dbReference type="InParanoid" id="Q5I597"/>
<dbReference type="OrthoDB" id="261426at2759"/>
<dbReference type="TreeFam" id="TF329202"/>
<dbReference type="UniPathway" id="UPA00051">
    <property type="reaction ID" value="UER00083"/>
</dbReference>
<dbReference type="UniPathway" id="UPA00291">
    <property type="reaction ID" value="UER00432"/>
</dbReference>
<dbReference type="Proteomes" id="UP000009136">
    <property type="component" value="Unplaced"/>
</dbReference>
<dbReference type="GO" id="GO:0005829">
    <property type="term" value="C:cytosol"/>
    <property type="evidence" value="ECO:0000318"/>
    <property type="project" value="GO_Central"/>
</dbReference>
<dbReference type="GO" id="GO:0005634">
    <property type="term" value="C:nucleus"/>
    <property type="evidence" value="ECO:0007669"/>
    <property type="project" value="UniProtKB-SubCell"/>
</dbReference>
<dbReference type="GO" id="GO:0047150">
    <property type="term" value="F:betaine-homocysteine S-methyltransferase activity"/>
    <property type="evidence" value="ECO:0000318"/>
    <property type="project" value="GO_Central"/>
</dbReference>
<dbReference type="GO" id="GO:0008270">
    <property type="term" value="F:zinc ion binding"/>
    <property type="evidence" value="ECO:0007669"/>
    <property type="project" value="InterPro"/>
</dbReference>
<dbReference type="GO" id="GO:0006579">
    <property type="term" value="P:amino-acid betaine catabolic process"/>
    <property type="evidence" value="ECO:0007669"/>
    <property type="project" value="UniProtKB-UniPathway"/>
</dbReference>
<dbReference type="GO" id="GO:0071267">
    <property type="term" value="P:L-methionine salvage"/>
    <property type="evidence" value="ECO:0000318"/>
    <property type="project" value="GO_Central"/>
</dbReference>
<dbReference type="GO" id="GO:0032259">
    <property type="term" value="P:methylation"/>
    <property type="evidence" value="ECO:0007669"/>
    <property type="project" value="UniProtKB-KW"/>
</dbReference>
<dbReference type="FunFam" id="3.20.20.330:FF:000003">
    <property type="entry name" value="Betaine--homocysteine S-methyltransferase 1"/>
    <property type="match status" value="1"/>
</dbReference>
<dbReference type="Gene3D" id="3.20.20.330">
    <property type="entry name" value="Homocysteine-binding-like domain"/>
    <property type="match status" value="1"/>
</dbReference>
<dbReference type="InterPro" id="IPR017226">
    <property type="entry name" value="Betaine-hCys_S-MeTrfase_BHMT"/>
</dbReference>
<dbReference type="InterPro" id="IPR051524">
    <property type="entry name" value="BHMT"/>
</dbReference>
<dbReference type="InterPro" id="IPR003726">
    <property type="entry name" value="HCY_dom"/>
</dbReference>
<dbReference type="InterPro" id="IPR036589">
    <property type="entry name" value="HCY_dom_sf"/>
</dbReference>
<dbReference type="PANTHER" id="PTHR46120">
    <property type="entry name" value="BETAINE--HOMOCYSTEINE S-METHYLTRANSFERASE 1"/>
    <property type="match status" value="1"/>
</dbReference>
<dbReference type="PANTHER" id="PTHR46120:SF2">
    <property type="entry name" value="BETAINE--HOMOCYSTEINE S-METHYLTRANSFERASE 1"/>
    <property type="match status" value="1"/>
</dbReference>
<dbReference type="Pfam" id="PF02574">
    <property type="entry name" value="S-methyl_trans"/>
    <property type="match status" value="1"/>
</dbReference>
<dbReference type="PIRSF" id="PIRSF037505">
    <property type="entry name" value="Betaine_HMT"/>
    <property type="match status" value="1"/>
</dbReference>
<dbReference type="SUPFAM" id="SSF82282">
    <property type="entry name" value="Homocysteine S-methyltransferase"/>
    <property type="match status" value="1"/>
</dbReference>
<dbReference type="PROSITE" id="PS50970">
    <property type="entry name" value="HCY"/>
    <property type="match status" value="1"/>
</dbReference>
<name>BHMT1_BOVIN</name>
<organism>
    <name type="scientific">Bos taurus</name>
    <name type="common">Bovine</name>
    <dbReference type="NCBI Taxonomy" id="9913"/>
    <lineage>
        <taxon>Eukaryota</taxon>
        <taxon>Metazoa</taxon>
        <taxon>Chordata</taxon>
        <taxon>Craniata</taxon>
        <taxon>Vertebrata</taxon>
        <taxon>Euteleostomi</taxon>
        <taxon>Mammalia</taxon>
        <taxon>Eutheria</taxon>
        <taxon>Laurasiatheria</taxon>
        <taxon>Artiodactyla</taxon>
        <taxon>Ruminantia</taxon>
        <taxon>Pecora</taxon>
        <taxon>Bovidae</taxon>
        <taxon>Bovinae</taxon>
        <taxon>Bos</taxon>
    </lineage>
</organism>
<evidence type="ECO:0000250" key="1">
    <source>
        <dbReference type="UniProtKB" id="O09171"/>
    </source>
</evidence>
<evidence type="ECO:0000250" key="2">
    <source>
        <dbReference type="UniProtKB" id="O35490"/>
    </source>
</evidence>
<evidence type="ECO:0000250" key="3">
    <source>
        <dbReference type="UniProtKB" id="Q93088"/>
    </source>
</evidence>
<evidence type="ECO:0000255" key="4">
    <source>
        <dbReference type="PROSITE-ProRule" id="PRU00333"/>
    </source>
</evidence>
<evidence type="ECO:0000305" key="5"/>
<protein>
    <recommendedName>
        <fullName>Betaine--homocysteine S-methyltransferase 1</fullName>
        <ecNumber evidence="3">2.1.1.5</ecNumber>
    </recommendedName>
</protein>
<accession>Q5I597</accession>
<accession>Q2KIL0</accession>
<reference key="1">
    <citation type="submission" date="2004-12" db="EMBL/GenBank/DDBJ databases">
        <title>Interactions folic acid-vitamin B12-methionine: effects on liver metabolism and production of dairy cows.</title>
        <authorList>
            <person name="Charest R."/>
            <person name="Beaudry D."/>
            <person name="Girard C."/>
            <person name="Palin M.-F."/>
        </authorList>
    </citation>
    <scope>NUCLEOTIDE SEQUENCE [MRNA]</scope>
    <source>
        <tissue>Liver</tissue>
    </source>
</reference>
<reference key="2">
    <citation type="submission" date="2006-01" db="EMBL/GenBank/DDBJ databases">
        <authorList>
            <consortium name="NIH - Mammalian Gene Collection (MGC) project"/>
        </authorList>
    </citation>
    <scope>NUCLEOTIDE SEQUENCE [LARGE SCALE MRNA]</scope>
    <source>
        <strain>Hereford</strain>
        <tissue>Testis</tissue>
    </source>
</reference>
<gene>
    <name type="primary">BHMT</name>
</gene>
<proteinExistence type="evidence at transcript level"/>
<comment type="function">
    <text evidence="3">Involved in the regulation of homocysteine metabolism. Converts betaine and homocysteine to dimethylglycine and methionine, respectively. This reaction is also required for the irreversible oxidation of choline.</text>
</comment>
<comment type="catalytic activity">
    <reaction evidence="3">
        <text>L-homocysteine + glycine betaine = N,N-dimethylglycine + L-methionine</text>
        <dbReference type="Rhea" id="RHEA:22336"/>
        <dbReference type="ChEBI" id="CHEBI:17750"/>
        <dbReference type="ChEBI" id="CHEBI:57844"/>
        <dbReference type="ChEBI" id="CHEBI:58199"/>
        <dbReference type="ChEBI" id="CHEBI:58251"/>
        <dbReference type="EC" id="2.1.1.5"/>
    </reaction>
    <physiologicalReaction direction="left-to-right" evidence="3">
        <dbReference type="Rhea" id="RHEA:22337"/>
    </physiologicalReaction>
</comment>
<comment type="cofactor">
    <cofactor evidence="3">
        <name>Zn(2+)</name>
        <dbReference type="ChEBI" id="CHEBI:29105"/>
    </cofactor>
    <text evidence="3">Binds 1 zinc ion per subunit.</text>
</comment>
<comment type="pathway">
    <text>Amine and polyamine degradation; betaine degradation; sarcosine from betaine: step 1/2.</text>
</comment>
<comment type="pathway">
    <text evidence="3">Amino-acid biosynthesis; L-methionine biosynthesis via de novo pathway; L-methionine from L-homocysteine (BhmT route): step 1/1.</text>
</comment>
<comment type="subunit">
    <text evidence="3">Homotetramer.</text>
</comment>
<comment type="subcellular location">
    <subcellularLocation>
        <location evidence="1">Cytoplasm</location>
        <location evidence="1">Cytosol</location>
    </subcellularLocation>
    <subcellularLocation>
        <location evidence="1">Nucleus</location>
    </subcellularLocation>
    <text evidence="1">Predominantly localized in the cytoplasm with a small fraction detected in the nucleus. Translocates into the nucleus upon oxidative stress.</text>
</comment>